<comment type="function">
    <text evidence="1">May be a substrate-recognition component of a SCF-like ECS (Elongin-Cullin-SOCS-box protein) E3 ubiquitin-protein ligase complex which mediates the ubiquitination and subsequent proteasomal degradation of target proteins.</text>
</comment>
<comment type="pathway">
    <text>Protein modification; protein ubiquitination.</text>
</comment>
<comment type="domain">
    <text evidence="1">The SOCS box domain mediates the interaction with the Elongin BC complex, an adapter module in different E3 ubiquitin-protein ligase complexes.</text>
</comment>
<comment type="similarity">
    <text evidence="3">Belongs to the ankyrin SOCS box (ASB) family.</text>
</comment>
<feature type="chain" id="PRO_0000283060" description="Ankyrin repeat and SOCS box protein 17">
    <location>
        <begin position="1"/>
        <end position="295"/>
    </location>
</feature>
<feature type="repeat" description="ANK">
    <location>
        <begin position="146"/>
        <end position="176"/>
    </location>
</feature>
<feature type="domain" description="SOCS box" evidence="2">
    <location>
        <begin position="232"/>
        <end position="295"/>
    </location>
</feature>
<keyword id="KW-0040">ANK repeat</keyword>
<keyword id="KW-1185">Reference proteome</keyword>
<keyword id="KW-0833">Ubl conjugation pathway</keyword>
<proteinExistence type="evidence at transcript level"/>
<accession>Q32KY8</accession>
<organism>
    <name type="scientific">Bos taurus</name>
    <name type="common">Bovine</name>
    <dbReference type="NCBI Taxonomy" id="9913"/>
    <lineage>
        <taxon>Eukaryota</taxon>
        <taxon>Metazoa</taxon>
        <taxon>Chordata</taxon>
        <taxon>Craniata</taxon>
        <taxon>Vertebrata</taxon>
        <taxon>Euteleostomi</taxon>
        <taxon>Mammalia</taxon>
        <taxon>Eutheria</taxon>
        <taxon>Laurasiatheria</taxon>
        <taxon>Artiodactyla</taxon>
        <taxon>Ruminantia</taxon>
        <taxon>Pecora</taxon>
        <taxon>Bovidae</taxon>
        <taxon>Bovinae</taxon>
        <taxon>Bos</taxon>
    </lineage>
</organism>
<protein>
    <recommendedName>
        <fullName>Ankyrin repeat and SOCS box protein 17</fullName>
        <shortName>ASB-17</shortName>
    </recommendedName>
</protein>
<dbReference type="EMBL" id="BC109851">
    <property type="protein sequence ID" value="AAI09852.1"/>
    <property type="molecule type" value="mRNA"/>
</dbReference>
<dbReference type="RefSeq" id="NP_001069898.1">
    <property type="nucleotide sequence ID" value="NM_001076430.2"/>
</dbReference>
<dbReference type="SMR" id="Q32KY8"/>
<dbReference type="STRING" id="9913.ENSBTAP00000007708"/>
<dbReference type="PaxDb" id="9913-ENSBTAP00000007708"/>
<dbReference type="Ensembl" id="ENSBTAT00000007708.6">
    <property type="protein sequence ID" value="ENSBTAP00000007708.6"/>
    <property type="gene ID" value="ENSBTAG00000005864.6"/>
</dbReference>
<dbReference type="GeneID" id="616654"/>
<dbReference type="KEGG" id="bta:616654"/>
<dbReference type="CTD" id="127247"/>
<dbReference type="VEuPathDB" id="HostDB:ENSBTAG00000005864"/>
<dbReference type="VGNC" id="VGNC:26194">
    <property type="gene designation" value="ASB17"/>
</dbReference>
<dbReference type="eggNOG" id="ENOG502QVW2">
    <property type="taxonomic scope" value="Eukaryota"/>
</dbReference>
<dbReference type="GeneTree" id="ENSGT00390000018077"/>
<dbReference type="InParanoid" id="Q32KY8"/>
<dbReference type="OMA" id="KLCHKTS"/>
<dbReference type="OrthoDB" id="6419934at2759"/>
<dbReference type="Reactome" id="R-BTA-8951664">
    <property type="pathway name" value="Neddylation"/>
</dbReference>
<dbReference type="Reactome" id="R-BTA-983168">
    <property type="pathway name" value="Antigen processing: Ubiquitination &amp; Proteasome degradation"/>
</dbReference>
<dbReference type="UniPathway" id="UPA00143"/>
<dbReference type="Proteomes" id="UP000009136">
    <property type="component" value="Chromosome 3"/>
</dbReference>
<dbReference type="Bgee" id="ENSBTAG00000005864">
    <property type="expression patterns" value="Expressed in semen and 10 other cell types or tissues"/>
</dbReference>
<dbReference type="GO" id="GO:0016567">
    <property type="term" value="P:protein ubiquitination"/>
    <property type="evidence" value="ECO:0007669"/>
    <property type="project" value="UniProtKB-UniPathway"/>
</dbReference>
<dbReference type="CDD" id="cd03716">
    <property type="entry name" value="SOCS_ASB_like"/>
    <property type="match status" value="1"/>
</dbReference>
<dbReference type="Gene3D" id="1.25.40.20">
    <property type="entry name" value="Ankyrin repeat-containing domain"/>
    <property type="match status" value="1"/>
</dbReference>
<dbReference type="InterPro" id="IPR036770">
    <property type="entry name" value="Ankyrin_rpt-contain_sf"/>
</dbReference>
<dbReference type="InterPro" id="IPR039147">
    <property type="entry name" value="ASB17"/>
</dbReference>
<dbReference type="InterPro" id="IPR001496">
    <property type="entry name" value="SOCS_box"/>
</dbReference>
<dbReference type="PANTHER" id="PTHR20966">
    <property type="entry name" value="ANKYRIN REPEAT AND SOCS BOX PROTEIN 17"/>
    <property type="match status" value="1"/>
</dbReference>
<dbReference type="PANTHER" id="PTHR20966:SF2">
    <property type="entry name" value="ANKYRIN REPEAT AND SOCS BOX PROTEIN 17"/>
    <property type="match status" value="1"/>
</dbReference>
<dbReference type="Pfam" id="PF07525">
    <property type="entry name" value="SOCS_box"/>
    <property type="match status" value="1"/>
</dbReference>
<dbReference type="SMART" id="SM00969">
    <property type="entry name" value="SOCS_box"/>
    <property type="match status" value="1"/>
</dbReference>
<dbReference type="PROSITE" id="PS50225">
    <property type="entry name" value="SOCS"/>
    <property type="match status" value="1"/>
</dbReference>
<name>ASB17_BOVIN</name>
<sequence>MSKSSKLCCKTSCPRSNIFCSLVDKVFKRPSLQSLHQWGYHCYEPRVYRTLAKILRYVDLEGFDILLSDYIAFVEKSGCHLEVNFNLEFTEICVNTILYWVFARKGNPDFVELLLKKTKDYVQDRSFNLALIWRTFTPVYCPSPLSGITPLLYVAQTRQSNILKILLQYGILERENNPINIVLTILLYPSRVRIMVDHELVDIEEDAKTCLVLCSRVLSTISIREIEMQLSLGRRPIISNWLDYIPSTRYKDPCELLHLCRITIRAQLLTNNMLPNGIFSLLIPVCLQNYLNLES</sequence>
<gene>
    <name type="primary">ASB17</name>
</gene>
<evidence type="ECO:0000250" key="1"/>
<evidence type="ECO:0000255" key="2">
    <source>
        <dbReference type="PROSITE-ProRule" id="PRU00194"/>
    </source>
</evidence>
<evidence type="ECO:0000305" key="3"/>
<reference key="1">
    <citation type="submission" date="2005-11" db="EMBL/GenBank/DDBJ databases">
        <authorList>
            <consortium name="NIH - Mammalian Gene Collection (MGC) project"/>
        </authorList>
    </citation>
    <scope>NUCLEOTIDE SEQUENCE [LARGE SCALE MRNA]</scope>
    <source>
        <strain>Crossbred X Angus</strain>
        <tissue>Liver</tissue>
    </source>
</reference>